<proteinExistence type="inferred from homology"/>
<evidence type="ECO:0000255" key="1">
    <source>
        <dbReference type="HAMAP-Rule" id="MF_00791"/>
    </source>
</evidence>
<name>APAG_SHESH</name>
<keyword id="KW-1185">Reference proteome</keyword>
<sequence length="126" mass="13969">MTSLEDSIKVEVKTEYIEGQSSPTEERYLFRYTITIVNLGEKAVTLKSRYWSITDANNHNSEVRGEGVVGETPTIEPDSAYQYTSGTVLETPLGVMQGSYTMITGEGESFKAQIPPFRLAVPGMLH</sequence>
<feature type="chain" id="PRO_1000083655" description="Protein ApaG">
    <location>
        <begin position="1"/>
        <end position="126"/>
    </location>
</feature>
<feature type="domain" description="ApaG" evidence="1">
    <location>
        <begin position="2"/>
        <end position="126"/>
    </location>
</feature>
<protein>
    <recommendedName>
        <fullName evidence="1">Protein ApaG</fullName>
    </recommendedName>
</protein>
<reference key="1">
    <citation type="submission" date="2007-08" db="EMBL/GenBank/DDBJ databases">
        <title>Complete sequence of Shewanella sediminis HAW-EB3.</title>
        <authorList>
            <consortium name="US DOE Joint Genome Institute"/>
            <person name="Copeland A."/>
            <person name="Lucas S."/>
            <person name="Lapidus A."/>
            <person name="Barry K."/>
            <person name="Glavina del Rio T."/>
            <person name="Dalin E."/>
            <person name="Tice H."/>
            <person name="Pitluck S."/>
            <person name="Chertkov O."/>
            <person name="Brettin T."/>
            <person name="Bruce D."/>
            <person name="Detter J.C."/>
            <person name="Han C."/>
            <person name="Schmutz J."/>
            <person name="Larimer F."/>
            <person name="Land M."/>
            <person name="Hauser L."/>
            <person name="Kyrpides N."/>
            <person name="Kim E."/>
            <person name="Zhao J.-S."/>
            <person name="Richardson P."/>
        </authorList>
    </citation>
    <scope>NUCLEOTIDE SEQUENCE [LARGE SCALE GENOMIC DNA]</scope>
    <source>
        <strain>HAW-EB3</strain>
    </source>
</reference>
<dbReference type="EMBL" id="CP000821">
    <property type="protein sequence ID" value="ABV35574.1"/>
    <property type="molecule type" value="Genomic_DNA"/>
</dbReference>
<dbReference type="RefSeq" id="WP_012141310.1">
    <property type="nucleotide sequence ID" value="NC_009831.1"/>
</dbReference>
<dbReference type="SMR" id="A8FRV1"/>
<dbReference type="STRING" id="425104.Ssed_0963"/>
<dbReference type="KEGG" id="sse:Ssed_0963"/>
<dbReference type="eggNOG" id="COG2967">
    <property type="taxonomic scope" value="Bacteria"/>
</dbReference>
<dbReference type="HOGENOM" id="CLU_128074_0_0_6"/>
<dbReference type="OrthoDB" id="9795226at2"/>
<dbReference type="Proteomes" id="UP000002015">
    <property type="component" value="Chromosome"/>
</dbReference>
<dbReference type="GO" id="GO:0070987">
    <property type="term" value="P:error-free translesion synthesis"/>
    <property type="evidence" value="ECO:0007669"/>
    <property type="project" value="TreeGrafter"/>
</dbReference>
<dbReference type="Gene3D" id="2.60.40.1470">
    <property type="entry name" value="ApaG domain"/>
    <property type="match status" value="1"/>
</dbReference>
<dbReference type="HAMAP" id="MF_00791">
    <property type="entry name" value="ApaG"/>
    <property type="match status" value="1"/>
</dbReference>
<dbReference type="InterPro" id="IPR007474">
    <property type="entry name" value="ApaG_domain"/>
</dbReference>
<dbReference type="InterPro" id="IPR036767">
    <property type="entry name" value="ApaG_sf"/>
</dbReference>
<dbReference type="InterPro" id="IPR023065">
    <property type="entry name" value="Uncharacterised_ApaG"/>
</dbReference>
<dbReference type="NCBIfam" id="NF003967">
    <property type="entry name" value="PRK05461.1"/>
    <property type="match status" value="1"/>
</dbReference>
<dbReference type="PANTHER" id="PTHR14289">
    <property type="entry name" value="F-BOX ONLY PROTEIN 3"/>
    <property type="match status" value="1"/>
</dbReference>
<dbReference type="PANTHER" id="PTHR14289:SF16">
    <property type="entry name" value="POLYMERASE DELTA-INTERACTING PROTEIN 2"/>
    <property type="match status" value="1"/>
</dbReference>
<dbReference type="Pfam" id="PF04379">
    <property type="entry name" value="DUF525"/>
    <property type="match status" value="1"/>
</dbReference>
<dbReference type="SUPFAM" id="SSF110069">
    <property type="entry name" value="ApaG-like"/>
    <property type="match status" value="1"/>
</dbReference>
<dbReference type="PROSITE" id="PS51087">
    <property type="entry name" value="APAG"/>
    <property type="match status" value="1"/>
</dbReference>
<accession>A8FRV1</accession>
<organism>
    <name type="scientific">Shewanella sediminis (strain HAW-EB3)</name>
    <dbReference type="NCBI Taxonomy" id="425104"/>
    <lineage>
        <taxon>Bacteria</taxon>
        <taxon>Pseudomonadati</taxon>
        <taxon>Pseudomonadota</taxon>
        <taxon>Gammaproteobacteria</taxon>
        <taxon>Alteromonadales</taxon>
        <taxon>Shewanellaceae</taxon>
        <taxon>Shewanella</taxon>
    </lineage>
</organism>
<gene>
    <name evidence="1" type="primary">apaG</name>
    <name type="ordered locus">Ssed_0963</name>
</gene>